<organism>
    <name type="scientific">Oceanobacillus iheyensis (strain DSM 14371 / CIP 107618 / JCM 11309 / KCTC 3954 / HTE831)</name>
    <dbReference type="NCBI Taxonomy" id="221109"/>
    <lineage>
        <taxon>Bacteria</taxon>
        <taxon>Bacillati</taxon>
        <taxon>Bacillota</taxon>
        <taxon>Bacilli</taxon>
        <taxon>Bacillales</taxon>
        <taxon>Bacillaceae</taxon>
        <taxon>Oceanobacillus</taxon>
    </lineage>
</organism>
<accession>Q8CXP9</accession>
<dbReference type="EC" id="2.7.7.23" evidence="1"/>
<dbReference type="EC" id="2.3.1.157" evidence="1"/>
<dbReference type="EMBL" id="BA000028">
    <property type="protein sequence ID" value="BAC12014.1"/>
    <property type="molecule type" value="Genomic_DNA"/>
</dbReference>
<dbReference type="RefSeq" id="WP_011064460.1">
    <property type="nucleotide sequence ID" value="NC_004193.1"/>
</dbReference>
<dbReference type="SMR" id="Q8CXP9"/>
<dbReference type="STRING" id="221109.gene:10732220"/>
<dbReference type="KEGG" id="oih:OB0058"/>
<dbReference type="eggNOG" id="COG1207">
    <property type="taxonomic scope" value="Bacteria"/>
</dbReference>
<dbReference type="HOGENOM" id="CLU_029499_15_2_9"/>
<dbReference type="OrthoDB" id="9775031at2"/>
<dbReference type="PhylomeDB" id="Q8CXP9"/>
<dbReference type="UniPathway" id="UPA00113">
    <property type="reaction ID" value="UER00532"/>
</dbReference>
<dbReference type="UniPathway" id="UPA00113">
    <property type="reaction ID" value="UER00533"/>
</dbReference>
<dbReference type="UniPathway" id="UPA00973"/>
<dbReference type="Proteomes" id="UP000000822">
    <property type="component" value="Chromosome"/>
</dbReference>
<dbReference type="GO" id="GO:0005737">
    <property type="term" value="C:cytoplasm"/>
    <property type="evidence" value="ECO:0007669"/>
    <property type="project" value="UniProtKB-SubCell"/>
</dbReference>
<dbReference type="GO" id="GO:0016020">
    <property type="term" value="C:membrane"/>
    <property type="evidence" value="ECO:0007669"/>
    <property type="project" value="GOC"/>
</dbReference>
<dbReference type="GO" id="GO:0019134">
    <property type="term" value="F:glucosamine-1-phosphate N-acetyltransferase activity"/>
    <property type="evidence" value="ECO:0007669"/>
    <property type="project" value="UniProtKB-UniRule"/>
</dbReference>
<dbReference type="GO" id="GO:0000287">
    <property type="term" value="F:magnesium ion binding"/>
    <property type="evidence" value="ECO:0007669"/>
    <property type="project" value="UniProtKB-UniRule"/>
</dbReference>
<dbReference type="GO" id="GO:0003977">
    <property type="term" value="F:UDP-N-acetylglucosamine diphosphorylase activity"/>
    <property type="evidence" value="ECO:0007669"/>
    <property type="project" value="UniProtKB-UniRule"/>
</dbReference>
<dbReference type="GO" id="GO:0000902">
    <property type="term" value="P:cell morphogenesis"/>
    <property type="evidence" value="ECO:0007669"/>
    <property type="project" value="UniProtKB-UniRule"/>
</dbReference>
<dbReference type="GO" id="GO:0071555">
    <property type="term" value="P:cell wall organization"/>
    <property type="evidence" value="ECO:0007669"/>
    <property type="project" value="UniProtKB-KW"/>
</dbReference>
<dbReference type="GO" id="GO:0009245">
    <property type="term" value="P:lipid A biosynthetic process"/>
    <property type="evidence" value="ECO:0007669"/>
    <property type="project" value="UniProtKB-UniRule"/>
</dbReference>
<dbReference type="GO" id="GO:0009252">
    <property type="term" value="P:peptidoglycan biosynthetic process"/>
    <property type="evidence" value="ECO:0007669"/>
    <property type="project" value="UniProtKB-UniRule"/>
</dbReference>
<dbReference type="GO" id="GO:0008360">
    <property type="term" value="P:regulation of cell shape"/>
    <property type="evidence" value="ECO:0007669"/>
    <property type="project" value="UniProtKB-KW"/>
</dbReference>
<dbReference type="GO" id="GO:0006048">
    <property type="term" value="P:UDP-N-acetylglucosamine biosynthetic process"/>
    <property type="evidence" value="ECO:0007669"/>
    <property type="project" value="UniProtKB-UniPathway"/>
</dbReference>
<dbReference type="CDD" id="cd02540">
    <property type="entry name" value="GT2_GlmU_N_bac"/>
    <property type="match status" value="1"/>
</dbReference>
<dbReference type="CDD" id="cd03353">
    <property type="entry name" value="LbH_GlmU_C"/>
    <property type="match status" value="1"/>
</dbReference>
<dbReference type="Gene3D" id="2.160.10.10">
    <property type="entry name" value="Hexapeptide repeat proteins"/>
    <property type="match status" value="1"/>
</dbReference>
<dbReference type="Gene3D" id="3.90.550.10">
    <property type="entry name" value="Spore Coat Polysaccharide Biosynthesis Protein SpsA, Chain A"/>
    <property type="match status" value="1"/>
</dbReference>
<dbReference type="HAMAP" id="MF_01631">
    <property type="entry name" value="GlmU"/>
    <property type="match status" value="1"/>
</dbReference>
<dbReference type="InterPro" id="IPR005882">
    <property type="entry name" value="Bifunctional_GlmU"/>
</dbReference>
<dbReference type="InterPro" id="IPR050065">
    <property type="entry name" value="GlmU-like"/>
</dbReference>
<dbReference type="InterPro" id="IPR038009">
    <property type="entry name" value="GlmU_C_LbH"/>
</dbReference>
<dbReference type="InterPro" id="IPR001451">
    <property type="entry name" value="Hexapep"/>
</dbReference>
<dbReference type="InterPro" id="IPR018357">
    <property type="entry name" value="Hexapep_transf_CS"/>
</dbReference>
<dbReference type="InterPro" id="IPR005835">
    <property type="entry name" value="NTP_transferase_dom"/>
</dbReference>
<dbReference type="InterPro" id="IPR029044">
    <property type="entry name" value="Nucleotide-diphossugar_trans"/>
</dbReference>
<dbReference type="InterPro" id="IPR011004">
    <property type="entry name" value="Trimer_LpxA-like_sf"/>
</dbReference>
<dbReference type="NCBIfam" id="TIGR01173">
    <property type="entry name" value="glmU"/>
    <property type="match status" value="1"/>
</dbReference>
<dbReference type="NCBIfam" id="NF010934">
    <property type="entry name" value="PRK14354.1"/>
    <property type="match status" value="1"/>
</dbReference>
<dbReference type="PANTHER" id="PTHR43584:SF3">
    <property type="entry name" value="BIFUNCTIONAL PROTEIN GLMU"/>
    <property type="match status" value="1"/>
</dbReference>
<dbReference type="PANTHER" id="PTHR43584">
    <property type="entry name" value="NUCLEOTIDYL TRANSFERASE"/>
    <property type="match status" value="1"/>
</dbReference>
<dbReference type="Pfam" id="PF00132">
    <property type="entry name" value="Hexapep"/>
    <property type="match status" value="2"/>
</dbReference>
<dbReference type="Pfam" id="PF00483">
    <property type="entry name" value="NTP_transferase"/>
    <property type="match status" value="1"/>
</dbReference>
<dbReference type="SUPFAM" id="SSF53448">
    <property type="entry name" value="Nucleotide-diphospho-sugar transferases"/>
    <property type="match status" value="1"/>
</dbReference>
<dbReference type="SUPFAM" id="SSF51161">
    <property type="entry name" value="Trimeric LpxA-like enzymes"/>
    <property type="match status" value="1"/>
</dbReference>
<dbReference type="PROSITE" id="PS00101">
    <property type="entry name" value="HEXAPEP_TRANSFERASES"/>
    <property type="match status" value="1"/>
</dbReference>
<proteinExistence type="inferred from homology"/>
<sequence>MANRFAVILAAGQGTRMKSKLHKMLHPVAGRPMVQHVVDQLQQVNLNKIVTIVGFGAEKVKAQLGSSSEFAFQKEQLGTGHAVLQAEDLLKDEKGVTVVACGDTPLIRAETFEELIQYHKKTGAKASILTTKVENPTGYGRVVRNDQDEVERIVEHKDANEGERLIQEINTGTYCFDNQALFAALKEVSNDNAQGEYYLPDVIKILRHQGDTVSAFMTPDFDETIGINDRIALAEAEKIMKKRINEQHMRNGVSIIDPEQTYIEPDVQIESDVILHPGTVLKGETIIRTGAEIGPHSELKDCEVGEDTVIRHSVATSSKVGNRVNIGPYAHIRPESRVGNDTKVGNFVEIKKTNLGDHSKVSHLSYIGDADVGERVNVGCGTITVNYDGTNKYLTTIEDDAFIGCNSNLIAPVTVGKGSYVAAGSTITKNVPENALSIARARQTNKEEYASKFKK</sequence>
<gene>
    <name evidence="1" type="primary">glmU</name>
    <name type="ordered locus">OB0058</name>
</gene>
<comment type="function">
    <text evidence="1">Catalyzes the last two sequential reactions in the de novo biosynthetic pathway for UDP-N-acetylglucosamine (UDP-GlcNAc). The C-terminal domain catalyzes the transfer of acetyl group from acetyl coenzyme A to glucosamine-1-phosphate (GlcN-1-P) to produce N-acetylglucosamine-1-phosphate (GlcNAc-1-P), which is converted into UDP-GlcNAc by the transfer of uridine 5-monophosphate (from uridine 5-triphosphate), a reaction catalyzed by the N-terminal domain.</text>
</comment>
<comment type="catalytic activity">
    <reaction evidence="1">
        <text>alpha-D-glucosamine 1-phosphate + acetyl-CoA = N-acetyl-alpha-D-glucosamine 1-phosphate + CoA + H(+)</text>
        <dbReference type="Rhea" id="RHEA:13725"/>
        <dbReference type="ChEBI" id="CHEBI:15378"/>
        <dbReference type="ChEBI" id="CHEBI:57287"/>
        <dbReference type="ChEBI" id="CHEBI:57288"/>
        <dbReference type="ChEBI" id="CHEBI:57776"/>
        <dbReference type="ChEBI" id="CHEBI:58516"/>
        <dbReference type="EC" id="2.3.1.157"/>
    </reaction>
</comment>
<comment type="catalytic activity">
    <reaction evidence="1">
        <text>N-acetyl-alpha-D-glucosamine 1-phosphate + UTP + H(+) = UDP-N-acetyl-alpha-D-glucosamine + diphosphate</text>
        <dbReference type="Rhea" id="RHEA:13509"/>
        <dbReference type="ChEBI" id="CHEBI:15378"/>
        <dbReference type="ChEBI" id="CHEBI:33019"/>
        <dbReference type="ChEBI" id="CHEBI:46398"/>
        <dbReference type="ChEBI" id="CHEBI:57705"/>
        <dbReference type="ChEBI" id="CHEBI:57776"/>
        <dbReference type="EC" id="2.7.7.23"/>
    </reaction>
</comment>
<comment type="cofactor">
    <cofactor evidence="1">
        <name>Mg(2+)</name>
        <dbReference type="ChEBI" id="CHEBI:18420"/>
    </cofactor>
    <text evidence="1">Binds 1 Mg(2+) ion per subunit.</text>
</comment>
<comment type="pathway">
    <text evidence="1">Nucleotide-sugar biosynthesis; UDP-N-acetyl-alpha-D-glucosamine biosynthesis; N-acetyl-alpha-D-glucosamine 1-phosphate from alpha-D-glucosamine 6-phosphate (route II): step 2/2.</text>
</comment>
<comment type="pathway">
    <text evidence="1">Nucleotide-sugar biosynthesis; UDP-N-acetyl-alpha-D-glucosamine biosynthesis; UDP-N-acetyl-alpha-D-glucosamine from N-acetyl-alpha-D-glucosamine 1-phosphate: step 1/1.</text>
</comment>
<comment type="pathway">
    <text evidence="1">Bacterial outer membrane biogenesis; LPS lipid A biosynthesis.</text>
</comment>
<comment type="subunit">
    <text evidence="1">Homotrimer.</text>
</comment>
<comment type="subcellular location">
    <subcellularLocation>
        <location evidence="1">Cytoplasm</location>
    </subcellularLocation>
</comment>
<comment type="similarity">
    <text evidence="1">In the N-terminal section; belongs to the N-acetylglucosamine-1-phosphate uridyltransferase family.</text>
</comment>
<comment type="similarity">
    <text evidence="1">In the C-terminal section; belongs to the transferase hexapeptide repeat family.</text>
</comment>
<name>GLMU_OCEIH</name>
<protein>
    <recommendedName>
        <fullName evidence="1">Bifunctional protein GlmU</fullName>
    </recommendedName>
    <domain>
        <recommendedName>
            <fullName evidence="1">UDP-N-acetylglucosamine pyrophosphorylase</fullName>
            <ecNumber evidence="1">2.7.7.23</ecNumber>
        </recommendedName>
        <alternativeName>
            <fullName evidence="1">N-acetylglucosamine-1-phosphate uridyltransferase</fullName>
        </alternativeName>
    </domain>
    <domain>
        <recommendedName>
            <fullName evidence="1">Glucosamine-1-phosphate N-acetyltransferase</fullName>
            <ecNumber evidence="1">2.3.1.157</ecNumber>
        </recommendedName>
    </domain>
</protein>
<reference key="1">
    <citation type="journal article" date="2002" name="Nucleic Acids Res.">
        <title>Genome sequence of Oceanobacillus iheyensis isolated from the Iheya Ridge and its unexpected adaptive capabilities to extreme environments.</title>
        <authorList>
            <person name="Takami H."/>
            <person name="Takaki Y."/>
            <person name="Uchiyama I."/>
        </authorList>
    </citation>
    <scope>NUCLEOTIDE SEQUENCE [LARGE SCALE GENOMIC DNA]</scope>
    <source>
        <strain>DSM 14371 / CIP 107618 / JCM 11309 / KCTC 3954 / HTE831</strain>
    </source>
</reference>
<evidence type="ECO:0000255" key="1">
    <source>
        <dbReference type="HAMAP-Rule" id="MF_01631"/>
    </source>
</evidence>
<keyword id="KW-0012">Acyltransferase</keyword>
<keyword id="KW-0133">Cell shape</keyword>
<keyword id="KW-0961">Cell wall biogenesis/degradation</keyword>
<keyword id="KW-0963">Cytoplasm</keyword>
<keyword id="KW-0460">Magnesium</keyword>
<keyword id="KW-0479">Metal-binding</keyword>
<keyword id="KW-0511">Multifunctional enzyme</keyword>
<keyword id="KW-0548">Nucleotidyltransferase</keyword>
<keyword id="KW-0573">Peptidoglycan synthesis</keyword>
<keyword id="KW-1185">Reference proteome</keyword>
<keyword id="KW-0677">Repeat</keyword>
<keyword id="KW-0808">Transferase</keyword>
<feature type="chain" id="PRO_0000233810" description="Bifunctional protein GlmU">
    <location>
        <begin position="1"/>
        <end position="455"/>
    </location>
</feature>
<feature type="region of interest" description="Pyrophosphorylase" evidence="1">
    <location>
        <begin position="1"/>
        <end position="230"/>
    </location>
</feature>
<feature type="region of interest" description="Linker" evidence="1">
    <location>
        <begin position="231"/>
        <end position="251"/>
    </location>
</feature>
<feature type="region of interest" description="N-acetyltransferase" evidence="1">
    <location>
        <begin position="252"/>
        <end position="455"/>
    </location>
</feature>
<feature type="active site" description="Proton acceptor" evidence="1">
    <location>
        <position position="363"/>
    </location>
</feature>
<feature type="binding site" evidence="1">
    <location>
        <begin position="9"/>
        <end position="12"/>
    </location>
    <ligand>
        <name>UDP-N-acetyl-alpha-D-glucosamine</name>
        <dbReference type="ChEBI" id="CHEBI:57705"/>
    </ligand>
</feature>
<feature type="binding site" evidence="1">
    <location>
        <position position="23"/>
    </location>
    <ligand>
        <name>UDP-N-acetyl-alpha-D-glucosamine</name>
        <dbReference type="ChEBI" id="CHEBI:57705"/>
    </ligand>
</feature>
<feature type="binding site" evidence="1">
    <location>
        <position position="73"/>
    </location>
    <ligand>
        <name>UDP-N-acetyl-alpha-D-glucosamine</name>
        <dbReference type="ChEBI" id="CHEBI:57705"/>
    </ligand>
</feature>
<feature type="binding site" evidence="1">
    <location>
        <begin position="78"/>
        <end position="79"/>
    </location>
    <ligand>
        <name>UDP-N-acetyl-alpha-D-glucosamine</name>
        <dbReference type="ChEBI" id="CHEBI:57705"/>
    </ligand>
</feature>
<feature type="binding site" evidence="1">
    <location>
        <position position="103"/>
    </location>
    <ligand>
        <name>Mg(2+)</name>
        <dbReference type="ChEBI" id="CHEBI:18420"/>
    </ligand>
</feature>
<feature type="binding site" evidence="1">
    <location>
        <position position="140"/>
    </location>
    <ligand>
        <name>UDP-N-acetyl-alpha-D-glucosamine</name>
        <dbReference type="ChEBI" id="CHEBI:57705"/>
    </ligand>
</feature>
<feature type="binding site" evidence="1">
    <location>
        <position position="155"/>
    </location>
    <ligand>
        <name>UDP-N-acetyl-alpha-D-glucosamine</name>
        <dbReference type="ChEBI" id="CHEBI:57705"/>
    </ligand>
</feature>
<feature type="binding site" evidence="1">
    <location>
        <position position="170"/>
    </location>
    <ligand>
        <name>UDP-N-acetyl-alpha-D-glucosamine</name>
        <dbReference type="ChEBI" id="CHEBI:57705"/>
    </ligand>
</feature>
<feature type="binding site" evidence="1">
    <location>
        <position position="228"/>
    </location>
    <ligand>
        <name>Mg(2+)</name>
        <dbReference type="ChEBI" id="CHEBI:18420"/>
    </ligand>
</feature>
<feature type="binding site" evidence="1">
    <location>
        <position position="228"/>
    </location>
    <ligand>
        <name>UDP-N-acetyl-alpha-D-glucosamine</name>
        <dbReference type="ChEBI" id="CHEBI:57705"/>
    </ligand>
</feature>
<feature type="binding site" evidence="1">
    <location>
        <position position="333"/>
    </location>
    <ligand>
        <name>UDP-N-acetyl-alpha-D-glucosamine</name>
        <dbReference type="ChEBI" id="CHEBI:57705"/>
    </ligand>
</feature>
<feature type="binding site" evidence="1">
    <location>
        <position position="351"/>
    </location>
    <ligand>
        <name>UDP-N-acetyl-alpha-D-glucosamine</name>
        <dbReference type="ChEBI" id="CHEBI:57705"/>
    </ligand>
</feature>
<feature type="binding site" evidence="1">
    <location>
        <position position="366"/>
    </location>
    <ligand>
        <name>UDP-N-acetyl-alpha-D-glucosamine</name>
        <dbReference type="ChEBI" id="CHEBI:57705"/>
    </ligand>
</feature>
<feature type="binding site" evidence="1">
    <location>
        <position position="377"/>
    </location>
    <ligand>
        <name>UDP-N-acetyl-alpha-D-glucosamine</name>
        <dbReference type="ChEBI" id="CHEBI:57705"/>
    </ligand>
</feature>
<feature type="binding site" evidence="1">
    <location>
        <begin position="386"/>
        <end position="387"/>
    </location>
    <ligand>
        <name>acetyl-CoA</name>
        <dbReference type="ChEBI" id="CHEBI:57288"/>
    </ligand>
</feature>
<feature type="binding site" evidence="1">
    <location>
        <position position="423"/>
    </location>
    <ligand>
        <name>acetyl-CoA</name>
        <dbReference type="ChEBI" id="CHEBI:57288"/>
    </ligand>
</feature>
<feature type="binding site" evidence="1">
    <location>
        <position position="440"/>
    </location>
    <ligand>
        <name>acetyl-CoA</name>
        <dbReference type="ChEBI" id="CHEBI:57288"/>
    </ligand>
</feature>